<proteinExistence type="inferred from homology"/>
<protein>
    <recommendedName>
        <fullName evidence="1">Elongation factor P</fullName>
        <shortName evidence="1">EF-P</shortName>
    </recommendedName>
</protein>
<sequence>MATYYSNDFRAGLKIMLDGEPYAVEASEFVKPGKGQAFARVKLRRLLTGTRVEKTFKSTDSAEGADVVDMNLTYLYNDGEFWHFMNNETFEQLSADAKAIGDNAKWLLDQAECIVTLWNGQPISVTPPNFVELEIVDTDPGLKGDTAGTGGKPATLSTGAVVKVPLFVQIGEVIKVDTRSGEYVSRVK</sequence>
<evidence type="ECO:0000255" key="1">
    <source>
        <dbReference type="HAMAP-Rule" id="MF_00141"/>
    </source>
</evidence>
<organism>
    <name type="scientific">Shigella flexneri serotype 5b (strain 8401)</name>
    <dbReference type="NCBI Taxonomy" id="373384"/>
    <lineage>
        <taxon>Bacteria</taxon>
        <taxon>Pseudomonadati</taxon>
        <taxon>Pseudomonadota</taxon>
        <taxon>Gammaproteobacteria</taxon>
        <taxon>Enterobacterales</taxon>
        <taxon>Enterobacteriaceae</taxon>
        <taxon>Shigella</taxon>
    </lineage>
</organism>
<name>EFP_SHIF8</name>
<reference key="1">
    <citation type="journal article" date="2006" name="BMC Genomics">
        <title>Complete genome sequence of Shigella flexneri 5b and comparison with Shigella flexneri 2a.</title>
        <authorList>
            <person name="Nie H."/>
            <person name="Yang F."/>
            <person name="Zhang X."/>
            <person name="Yang J."/>
            <person name="Chen L."/>
            <person name="Wang J."/>
            <person name="Xiong Z."/>
            <person name="Peng J."/>
            <person name="Sun L."/>
            <person name="Dong J."/>
            <person name="Xue Y."/>
            <person name="Xu X."/>
            <person name="Chen S."/>
            <person name="Yao Z."/>
            <person name="Shen Y."/>
            <person name="Jin Q."/>
        </authorList>
    </citation>
    <scope>NUCLEOTIDE SEQUENCE [LARGE SCALE GENOMIC DNA]</scope>
    <source>
        <strain>8401</strain>
    </source>
</reference>
<dbReference type="EMBL" id="CP000266">
    <property type="protein sequence ID" value="ABF06285.1"/>
    <property type="molecule type" value="Genomic_DNA"/>
</dbReference>
<dbReference type="RefSeq" id="WP_000257278.1">
    <property type="nucleotide sequence ID" value="NC_008258.1"/>
</dbReference>
<dbReference type="SMR" id="Q0SXD0"/>
<dbReference type="GeneID" id="93777677"/>
<dbReference type="KEGG" id="sfv:SFV_4305"/>
<dbReference type="HOGENOM" id="CLU_074944_0_0_6"/>
<dbReference type="UniPathway" id="UPA00345"/>
<dbReference type="Proteomes" id="UP000000659">
    <property type="component" value="Chromosome"/>
</dbReference>
<dbReference type="GO" id="GO:0005829">
    <property type="term" value="C:cytosol"/>
    <property type="evidence" value="ECO:0007669"/>
    <property type="project" value="UniProtKB-ARBA"/>
</dbReference>
<dbReference type="GO" id="GO:0003746">
    <property type="term" value="F:translation elongation factor activity"/>
    <property type="evidence" value="ECO:0007669"/>
    <property type="project" value="UniProtKB-UniRule"/>
</dbReference>
<dbReference type="GO" id="GO:0043043">
    <property type="term" value="P:peptide biosynthetic process"/>
    <property type="evidence" value="ECO:0007669"/>
    <property type="project" value="InterPro"/>
</dbReference>
<dbReference type="CDD" id="cd04470">
    <property type="entry name" value="S1_EF-P_repeat_1"/>
    <property type="match status" value="1"/>
</dbReference>
<dbReference type="CDD" id="cd05794">
    <property type="entry name" value="S1_EF-P_repeat_2"/>
    <property type="match status" value="1"/>
</dbReference>
<dbReference type="FunFam" id="2.30.30.30:FF:000003">
    <property type="entry name" value="Elongation factor P"/>
    <property type="match status" value="1"/>
</dbReference>
<dbReference type="FunFam" id="2.40.50.140:FF:000004">
    <property type="entry name" value="Elongation factor P"/>
    <property type="match status" value="1"/>
</dbReference>
<dbReference type="FunFam" id="2.40.50.140:FF:000009">
    <property type="entry name" value="Elongation factor P"/>
    <property type="match status" value="1"/>
</dbReference>
<dbReference type="Gene3D" id="2.30.30.30">
    <property type="match status" value="1"/>
</dbReference>
<dbReference type="Gene3D" id="2.40.50.140">
    <property type="entry name" value="Nucleic acid-binding proteins"/>
    <property type="match status" value="2"/>
</dbReference>
<dbReference type="HAMAP" id="MF_00141">
    <property type="entry name" value="EF_P"/>
    <property type="match status" value="1"/>
</dbReference>
<dbReference type="InterPro" id="IPR015365">
    <property type="entry name" value="Elong-fact-P_C"/>
</dbReference>
<dbReference type="InterPro" id="IPR012340">
    <property type="entry name" value="NA-bd_OB-fold"/>
</dbReference>
<dbReference type="InterPro" id="IPR014722">
    <property type="entry name" value="Rib_uL2_dom2"/>
</dbReference>
<dbReference type="InterPro" id="IPR020599">
    <property type="entry name" value="Transl_elong_fac_P/YeiP"/>
</dbReference>
<dbReference type="InterPro" id="IPR013185">
    <property type="entry name" value="Transl_elong_KOW-like"/>
</dbReference>
<dbReference type="InterPro" id="IPR001059">
    <property type="entry name" value="Transl_elong_P/YeiP_cen"/>
</dbReference>
<dbReference type="InterPro" id="IPR013852">
    <property type="entry name" value="Transl_elong_P/YeiP_CS"/>
</dbReference>
<dbReference type="InterPro" id="IPR011768">
    <property type="entry name" value="Transl_elongation_fac_P"/>
</dbReference>
<dbReference type="InterPro" id="IPR008991">
    <property type="entry name" value="Translation_prot_SH3-like_sf"/>
</dbReference>
<dbReference type="NCBIfam" id="TIGR00038">
    <property type="entry name" value="efp"/>
    <property type="match status" value="1"/>
</dbReference>
<dbReference type="NCBIfam" id="NF001810">
    <property type="entry name" value="PRK00529.1"/>
    <property type="match status" value="1"/>
</dbReference>
<dbReference type="PANTHER" id="PTHR30053">
    <property type="entry name" value="ELONGATION FACTOR P"/>
    <property type="match status" value="1"/>
</dbReference>
<dbReference type="PANTHER" id="PTHR30053:SF12">
    <property type="entry name" value="ELONGATION FACTOR P (EF-P) FAMILY PROTEIN"/>
    <property type="match status" value="1"/>
</dbReference>
<dbReference type="Pfam" id="PF01132">
    <property type="entry name" value="EFP"/>
    <property type="match status" value="1"/>
</dbReference>
<dbReference type="Pfam" id="PF08207">
    <property type="entry name" value="EFP_N"/>
    <property type="match status" value="1"/>
</dbReference>
<dbReference type="Pfam" id="PF09285">
    <property type="entry name" value="Elong-fact-P_C"/>
    <property type="match status" value="1"/>
</dbReference>
<dbReference type="PIRSF" id="PIRSF005901">
    <property type="entry name" value="EF-P"/>
    <property type="match status" value="1"/>
</dbReference>
<dbReference type="SMART" id="SM01185">
    <property type="entry name" value="EFP"/>
    <property type="match status" value="1"/>
</dbReference>
<dbReference type="SMART" id="SM00841">
    <property type="entry name" value="Elong-fact-P_C"/>
    <property type="match status" value="1"/>
</dbReference>
<dbReference type="SUPFAM" id="SSF50249">
    <property type="entry name" value="Nucleic acid-binding proteins"/>
    <property type="match status" value="2"/>
</dbReference>
<dbReference type="SUPFAM" id="SSF50104">
    <property type="entry name" value="Translation proteins SH3-like domain"/>
    <property type="match status" value="1"/>
</dbReference>
<dbReference type="PROSITE" id="PS01275">
    <property type="entry name" value="EFP"/>
    <property type="match status" value="1"/>
</dbReference>
<feature type="chain" id="PRO_1000010857" description="Elongation factor P">
    <location>
        <begin position="1"/>
        <end position="188"/>
    </location>
</feature>
<feature type="modified residue" description="N6-(3,6-diaminohexanoyl)-5-hydroxylysine" evidence="1">
    <location>
        <position position="34"/>
    </location>
</feature>
<accession>Q0SXD0</accession>
<comment type="function">
    <text evidence="1">Involved in peptide bond synthesis. Alleviates ribosome stalling that occurs when 3 or more consecutive Pro residues or the sequence PPG is present in a protein, possibly by augmenting the peptidyl transferase activity of the ribosome. Modification of Lys-34 is required for alleviation.</text>
</comment>
<comment type="pathway">
    <text evidence="1">Protein biosynthesis; polypeptide chain elongation.</text>
</comment>
<comment type="subcellular location">
    <subcellularLocation>
        <location evidence="1">Cytoplasm</location>
    </subcellularLocation>
</comment>
<comment type="PTM">
    <text evidence="1">Is beta-lysylated on the epsilon-amino group of Lys-34 by the combined action of EpmA and EpmB, and then hydroxylated on the C5 position of the same residue by EpmC. Lysylation is critical for the stimulatory effect of EF-P on peptide-bond formation. The lysylation moiety would extend toward the peptidyltransferase center and stabilize the terminal 3-CCA end of the tRNA. The hydroxylation of the C5 position on Lys-34 would allow additional potential stabilizing hydrogen-bond interactions with the P-tRNA.</text>
</comment>
<comment type="similarity">
    <text evidence="1">Belongs to the elongation factor P family.</text>
</comment>
<keyword id="KW-0963">Cytoplasm</keyword>
<keyword id="KW-0251">Elongation factor</keyword>
<keyword id="KW-0379">Hydroxylation</keyword>
<keyword id="KW-0648">Protein biosynthesis</keyword>
<gene>
    <name evidence="1" type="primary">efp</name>
    <name type="ordered locus">SFV_4305</name>
</gene>